<accession>Q12563</accession>
<dbReference type="EC" id="3.2.1.113" evidence="3"/>
<dbReference type="EMBL" id="D49827">
    <property type="protein sequence ID" value="BAA08634.1"/>
    <property type="molecule type" value="mRNA"/>
</dbReference>
<dbReference type="SMR" id="Q12563"/>
<dbReference type="CAZy" id="GH47">
    <property type="family name" value="Glycoside Hydrolase Family 47"/>
</dbReference>
<dbReference type="GlyCosmos" id="Q12563">
    <property type="glycosylation" value="8 sites, No reported glycans"/>
</dbReference>
<dbReference type="SABIO-RK" id="Q12563"/>
<dbReference type="UniPathway" id="UPA00378"/>
<dbReference type="GO" id="GO:0060205">
    <property type="term" value="C:cytoplasmic vesicle lumen"/>
    <property type="evidence" value="ECO:0007669"/>
    <property type="project" value="UniProtKB-SubCell"/>
</dbReference>
<dbReference type="GO" id="GO:0005783">
    <property type="term" value="C:endoplasmic reticulum"/>
    <property type="evidence" value="ECO:0007669"/>
    <property type="project" value="TreeGrafter"/>
</dbReference>
<dbReference type="GO" id="GO:0016020">
    <property type="term" value="C:membrane"/>
    <property type="evidence" value="ECO:0007669"/>
    <property type="project" value="InterPro"/>
</dbReference>
<dbReference type="GO" id="GO:0005509">
    <property type="term" value="F:calcium ion binding"/>
    <property type="evidence" value="ECO:0007669"/>
    <property type="project" value="InterPro"/>
</dbReference>
<dbReference type="GO" id="GO:0004571">
    <property type="term" value="F:mannosyl-oligosaccharide 1,2-alpha-mannosidase activity"/>
    <property type="evidence" value="ECO:0007669"/>
    <property type="project" value="UniProtKB-EC"/>
</dbReference>
<dbReference type="GO" id="GO:0005975">
    <property type="term" value="P:carbohydrate metabolic process"/>
    <property type="evidence" value="ECO:0007669"/>
    <property type="project" value="InterPro"/>
</dbReference>
<dbReference type="GO" id="GO:0036503">
    <property type="term" value="P:ERAD pathway"/>
    <property type="evidence" value="ECO:0007669"/>
    <property type="project" value="UniProtKB-ARBA"/>
</dbReference>
<dbReference type="GO" id="GO:0006486">
    <property type="term" value="P:protein glycosylation"/>
    <property type="evidence" value="ECO:0007669"/>
    <property type="project" value="UniProtKB-UniPathway"/>
</dbReference>
<dbReference type="FunFam" id="1.50.10.10:FF:000047">
    <property type="entry name" value="Mannosyl-oligosaccharide alpha-1,2-mannosidase"/>
    <property type="match status" value="1"/>
</dbReference>
<dbReference type="Gene3D" id="1.50.10.10">
    <property type="match status" value="1"/>
</dbReference>
<dbReference type="InterPro" id="IPR012341">
    <property type="entry name" value="6hp_glycosidase-like_sf"/>
</dbReference>
<dbReference type="InterPro" id="IPR001382">
    <property type="entry name" value="Glyco_hydro_47"/>
</dbReference>
<dbReference type="InterPro" id="IPR050749">
    <property type="entry name" value="Glycosyl_Hydrolase_47"/>
</dbReference>
<dbReference type="InterPro" id="IPR036026">
    <property type="entry name" value="Seven-hairpin_glycosidases"/>
</dbReference>
<dbReference type="PANTHER" id="PTHR11742:SF101">
    <property type="entry name" value="MANNOSYL-OLIGOSACCHARIDE ALPHA-1,2-MANNOSIDASE 1B"/>
    <property type="match status" value="1"/>
</dbReference>
<dbReference type="PANTHER" id="PTHR11742">
    <property type="entry name" value="MANNOSYL-OLIGOSACCHARIDE ALPHA-1,2-MANNOSIDASE-RELATED"/>
    <property type="match status" value="1"/>
</dbReference>
<dbReference type="Pfam" id="PF01532">
    <property type="entry name" value="Glyco_hydro_47"/>
    <property type="match status" value="1"/>
</dbReference>
<dbReference type="PRINTS" id="PR00747">
    <property type="entry name" value="GLYHDRLASE47"/>
</dbReference>
<dbReference type="SUPFAM" id="SSF48225">
    <property type="entry name" value="Seven-hairpin glycosidases"/>
    <property type="match status" value="1"/>
</dbReference>
<feature type="signal peptide" evidence="5">
    <location>
        <begin position="1"/>
        <end position="21"/>
    </location>
</feature>
<feature type="chain" id="PRO_0000394821" description="Mannosyl-oligosaccharide alpha-1,2-mannosidase 1B">
    <location>
        <begin position="22"/>
        <end position="513"/>
    </location>
</feature>
<feature type="active site" description="Proton donor" evidence="2">
    <location>
        <position position="377"/>
    </location>
</feature>
<feature type="binding site" evidence="3">
    <location>
        <position position="503"/>
    </location>
    <ligand>
        <name>Ca(2+)</name>
        <dbReference type="ChEBI" id="CHEBI:29108"/>
    </ligand>
</feature>
<feature type="glycosylation site" description="N-linked (GlcNAc...) asparagine" evidence="5">
    <location>
        <position position="97"/>
    </location>
</feature>
<feature type="glycosylation site" description="N-linked (GlcNAc...) asparagine" evidence="5">
    <location>
        <position position="117"/>
    </location>
</feature>
<feature type="glycosylation site" description="N-linked (GlcNAc...) asparagine" evidence="5">
    <location>
        <position position="150"/>
    </location>
</feature>
<feature type="glycosylation site" description="N-linked (GlcNAc...) asparagine" evidence="5">
    <location>
        <position position="184"/>
    </location>
</feature>
<feature type="glycosylation site" description="N-linked (GlcNAc...) asparagine" evidence="5">
    <location>
        <position position="251"/>
    </location>
</feature>
<feature type="glycosylation site" description="N-linked (GlcNAc...) asparagine" evidence="5">
    <location>
        <position position="322"/>
    </location>
</feature>
<feature type="glycosylation site" description="N-linked (GlcNAc...) asparagine" evidence="5">
    <location>
        <position position="348"/>
    </location>
</feature>
<feature type="glycosylation site" description="N-linked (GlcNAc...) asparagine" evidence="5">
    <location>
        <position position="368"/>
    </location>
</feature>
<feature type="disulfide bond" evidence="3">
    <location>
        <begin position="334"/>
        <end position="363"/>
    </location>
</feature>
<sequence>MHLPSLSLSLTALAIASPSAAYPHFGSSQPVLHSSSDTTQSRADAIKAAFSHAWDGYLQYAFPHDELHPVSNGYGDSRNGWGASAVDALSTAVIMRNATIVNQILDHVGKIDYSKTNTTVSLFETTIRYLGGMLSGYDLLKGPVSDLVQNSSKIDVLLTQSKNLADVLKFAFDTPSGVPYNNLNITSGGNDGAKTNGLAVTGTLALEWTRLSDLTGDTTYADLSQKAESYLLNPQPKSAEPFPGLVGSNINISNGQFTDAQVSWNGGDDSYYEYLIKMYVYDPKRFGLYKDRWVAAAQSTMQHLASHPSSRPDLTFLASYNNGTLGLSSQHLTCFDGGSFLLGGTVLNRTDFINFGLDLVSGCHDTYNSTLTGIGPESFSWDTSDIPSSQQSLYEKAGFYITSGAYILRPEVIESFYYAWRVTGQETYRDWIWSAFSAVNDYCRTSSGFSGLTDVNAANGGSRYDNQESFLFAEVMKYSYMAFAEDAAWQVQPGSGNQFVFNTEAHPVRVSST</sequence>
<comment type="function">
    <text evidence="6">Involved in the maturation of Asn-linked oligosaccharides. Progressively trims alpha-1,2-linked mannose residues from Man(9)GlcNAc(2) to produce Man(5)GlcNAc(2).</text>
</comment>
<comment type="catalytic activity">
    <reaction evidence="3">
        <text>N(4)-(alpha-D-Man-(1-&gt;2)-alpha-D-Man-(1-&gt;2)-alpha-D-Man-(1-&gt;3)-[alpha-D-Man-(1-&gt;2)-alpha-D-Man-(1-&gt;3)-[alpha-D-Man-(1-&gt;2)-alpha-D-Man-(1-&gt;6)]-alpha-D-Man-(1-&gt;6)]-beta-D-Man-(1-&gt;4)-beta-D-GlcNAc-(1-&gt;4)-beta-D-GlcNAc)-L-asparaginyl-[protein] (N-glucan mannose isomer 9A1,2,3B1,2,3) + 4 H2O = N(4)-(alpha-D-Man-(1-&gt;3)-[alpha-D-Man-(1-&gt;3)-[alpha-D-Man-(1-&gt;6)]-alpha-D-Man-(1-&gt;6)]-beta-D-Man-(1-&gt;4)-beta-D-GlcNAc-(1-&gt;4)-beta-D-GlcNAc)-L-asparaginyl-[protein] (N-glucan mannose isomer 5A1,2) + 4 beta-D-mannose</text>
        <dbReference type="Rhea" id="RHEA:56008"/>
        <dbReference type="Rhea" id="RHEA-COMP:14356"/>
        <dbReference type="Rhea" id="RHEA-COMP:14367"/>
        <dbReference type="ChEBI" id="CHEBI:15377"/>
        <dbReference type="ChEBI" id="CHEBI:28563"/>
        <dbReference type="ChEBI" id="CHEBI:59087"/>
        <dbReference type="ChEBI" id="CHEBI:139493"/>
        <dbReference type="EC" id="3.2.1.113"/>
    </reaction>
</comment>
<comment type="catalytic activity">
    <reaction evidence="3">
        <text>N(4)-(alpha-D-Man-(1-&gt;2)-alpha-D-Man-(1-&gt;2)-alpha-D-Man-(1-&gt;3)-[alpha-D-Man-(1-&gt;3)-[alpha-D-Man-(1-&gt;2)-alpha-D-Man-(1-&gt;6)]-alpha-D-Man-(1-&gt;6)]-beta-D-Man-(1-&gt;4)-beta-D-GlcNAc-(1-&gt;4)-beta-D-GlcNAc)-L-asparaginyl-[protein] (N-glucan mannose isomer 8A1,2,3B1,3) + 3 H2O = N(4)-(alpha-D-Man-(1-&gt;3)-[alpha-D-Man-(1-&gt;3)-[alpha-D-Man-(1-&gt;6)]-alpha-D-Man-(1-&gt;6)]-beta-D-Man-(1-&gt;4)-beta-D-GlcNAc-(1-&gt;4)-beta-D-GlcNAc)-L-asparaginyl-[protein] (N-glucan mannose isomer 5A1,2) + 3 beta-D-mannose</text>
        <dbReference type="Rhea" id="RHEA:56028"/>
        <dbReference type="Rhea" id="RHEA-COMP:14358"/>
        <dbReference type="Rhea" id="RHEA-COMP:14367"/>
        <dbReference type="ChEBI" id="CHEBI:15377"/>
        <dbReference type="ChEBI" id="CHEBI:28563"/>
        <dbReference type="ChEBI" id="CHEBI:59087"/>
        <dbReference type="ChEBI" id="CHEBI:60628"/>
        <dbReference type="EC" id="3.2.1.113"/>
    </reaction>
</comment>
<comment type="cofactor">
    <cofactor evidence="4">
        <name>Ca(2+)</name>
        <dbReference type="ChEBI" id="CHEBI:29108"/>
    </cofactor>
    <cofactor evidence="4">
        <name>Mg(2+)</name>
        <dbReference type="ChEBI" id="CHEBI:18420"/>
    </cofactor>
    <text evidence="4">Ca(2+). Can also use Mg(2+), but with lower efficiency.</text>
</comment>
<comment type="pathway">
    <text evidence="3">Protein modification; protein glycosylation.</text>
</comment>
<comment type="subunit">
    <text evidence="1">Monomer.</text>
</comment>
<comment type="subcellular location">
    <subcellularLocation>
        <location evidence="1">Cytoplasmic vesicle lumen</location>
    </subcellularLocation>
</comment>
<comment type="similarity">
    <text evidence="7">Belongs to the glycosyl hydrolase 47 family.</text>
</comment>
<name>MNS1B_ASPPH</name>
<evidence type="ECO:0000250" key="1"/>
<evidence type="ECO:0000250" key="2">
    <source>
        <dbReference type="UniProtKB" id="P31723"/>
    </source>
</evidence>
<evidence type="ECO:0000250" key="3">
    <source>
        <dbReference type="UniProtKB" id="P32906"/>
    </source>
</evidence>
<evidence type="ECO:0000250" key="4">
    <source>
        <dbReference type="UniProtKB" id="Q2ULB2"/>
    </source>
</evidence>
<evidence type="ECO:0000255" key="5"/>
<evidence type="ECO:0000269" key="6">
    <source>
    </source>
</evidence>
<evidence type="ECO:0000305" key="7"/>
<reference key="1">
    <citation type="journal article" date="1995" name="Biochim. Biophys. Acta">
        <title>Molecular cloning and nucleotide sequence of the 1,2-alpha-D-mannosidase gene, msdS, from Aspergillus saitoi and expression of the gene in yeast cells.</title>
        <authorList>
            <person name="Inoue T."/>
            <person name="Yoshida T."/>
            <person name="Ichishima E."/>
        </authorList>
    </citation>
    <scope>NUCLEOTIDE SEQUENCE [MRNA]</scope>
    <scope>FUNCTION</scope>
</reference>
<organism>
    <name type="scientific">Aspergillus phoenicis</name>
    <name type="common">Aspergillus saitoi</name>
    <dbReference type="NCBI Taxonomy" id="5063"/>
    <lineage>
        <taxon>Eukaryota</taxon>
        <taxon>Fungi</taxon>
        <taxon>Dikarya</taxon>
        <taxon>Ascomycota</taxon>
        <taxon>Pezizomycotina</taxon>
        <taxon>Eurotiomycetes</taxon>
        <taxon>Eurotiomycetidae</taxon>
        <taxon>Eurotiales</taxon>
        <taxon>Aspergillaceae</taxon>
        <taxon>Aspergillus</taxon>
    </lineage>
</organism>
<keyword id="KW-0119">Carbohydrate metabolism</keyword>
<keyword id="KW-0968">Cytoplasmic vesicle</keyword>
<keyword id="KW-1015">Disulfide bond</keyword>
<keyword id="KW-0325">Glycoprotein</keyword>
<keyword id="KW-0326">Glycosidase</keyword>
<keyword id="KW-0378">Hydrolase</keyword>
<keyword id="KW-0479">Metal-binding</keyword>
<keyword id="KW-0732">Signal</keyword>
<protein>
    <recommendedName>
        <fullName>Mannosyl-oligosaccharide alpha-1,2-mannosidase 1B</fullName>
        <ecNumber evidence="3">3.2.1.113</ecNumber>
    </recommendedName>
    <alternativeName>
        <fullName>Class I alpha-mannosidase 1B</fullName>
    </alternativeName>
    <alternativeName>
        <fullName>Man(9)-alpha-mannosidase 1B</fullName>
    </alternativeName>
</protein>
<proteinExistence type="evidence at transcript level"/>
<gene>
    <name type="primary">mns1B</name>
    <name type="synonym">msdS</name>
</gene>